<accession>A7MBJ1</accession>
<gene>
    <name type="primary">MTURN</name>
</gene>
<reference key="1">
    <citation type="submission" date="2007-07" db="EMBL/GenBank/DDBJ databases">
        <authorList>
            <consortium name="NIH - Mammalian Gene Collection (MGC) project"/>
        </authorList>
    </citation>
    <scope>NUCLEOTIDE SEQUENCE [LARGE SCALE MRNA]</scope>
    <source>
        <strain>Hereford</strain>
        <tissue>Hypothalamus</tissue>
    </source>
</reference>
<keyword id="KW-0963">Cytoplasm</keyword>
<keyword id="KW-0217">Developmental protein</keyword>
<keyword id="KW-0597">Phosphoprotein</keyword>
<keyword id="KW-1185">Reference proteome</keyword>
<organism>
    <name type="scientific">Bos taurus</name>
    <name type="common">Bovine</name>
    <dbReference type="NCBI Taxonomy" id="9913"/>
    <lineage>
        <taxon>Eukaryota</taxon>
        <taxon>Metazoa</taxon>
        <taxon>Chordata</taxon>
        <taxon>Craniata</taxon>
        <taxon>Vertebrata</taxon>
        <taxon>Euteleostomi</taxon>
        <taxon>Mammalia</taxon>
        <taxon>Eutheria</taxon>
        <taxon>Laurasiatheria</taxon>
        <taxon>Artiodactyla</taxon>
        <taxon>Ruminantia</taxon>
        <taxon>Pecora</taxon>
        <taxon>Bovidae</taxon>
        <taxon>Bovinae</taxon>
        <taxon>Bos</taxon>
    </lineage>
</organism>
<sequence length="131" mass="14925">MDFQQLADVAEKWCSNTPFELIATEETERRMDFYADPGVSFYVLCPDNGCGDNFHVWSESEDCLPFLQLAQDYISSCGKKTLHEVLEKVFKSFRPLLGLPDADDDAFEEYSADVEEEEPEADHPQMGVSQQ</sequence>
<protein>
    <recommendedName>
        <fullName>Maturin</fullName>
    </recommendedName>
    <alternativeName>
        <fullName>Maturin neural progenitor differentiation regulator protein homolog</fullName>
    </alternativeName>
</protein>
<dbReference type="EMBL" id="BC151589">
    <property type="protein sequence ID" value="AAI51590.1"/>
    <property type="molecule type" value="mRNA"/>
</dbReference>
<dbReference type="RefSeq" id="NP_001094716.1">
    <property type="nucleotide sequence ID" value="NM_001101246.1"/>
</dbReference>
<dbReference type="FunCoup" id="A7MBJ1">
    <property type="interactions" value="504"/>
</dbReference>
<dbReference type="STRING" id="9913.ENSBTAP00000064575"/>
<dbReference type="PaxDb" id="9913-ENSBTAP00000049943"/>
<dbReference type="GeneID" id="615685"/>
<dbReference type="KEGG" id="bta:615685"/>
<dbReference type="CTD" id="222166"/>
<dbReference type="eggNOG" id="ENOG502RXQA">
    <property type="taxonomic scope" value="Eukaryota"/>
</dbReference>
<dbReference type="HOGENOM" id="CLU_163056_0_0_1"/>
<dbReference type="InParanoid" id="A7MBJ1"/>
<dbReference type="OrthoDB" id="9922400at2759"/>
<dbReference type="TreeFam" id="TF332814"/>
<dbReference type="Proteomes" id="UP000009136">
    <property type="component" value="Unplaced"/>
</dbReference>
<dbReference type="GO" id="GO:0005737">
    <property type="term" value="C:cytoplasm"/>
    <property type="evidence" value="ECO:0000250"/>
    <property type="project" value="UniProtKB"/>
</dbReference>
<dbReference type="GO" id="GO:0045654">
    <property type="term" value="P:positive regulation of megakaryocyte differentiation"/>
    <property type="evidence" value="ECO:0000250"/>
    <property type="project" value="UniProtKB"/>
</dbReference>
<dbReference type="GO" id="GO:0023051">
    <property type="term" value="P:regulation of signaling"/>
    <property type="evidence" value="ECO:0000318"/>
    <property type="project" value="GO_Central"/>
</dbReference>
<dbReference type="InterPro" id="IPR027892">
    <property type="entry name" value="Maturin"/>
</dbReference>
<dbReference type="PANTHER" id="PTHR32008">
    <property type="entry name" value="MATURIN"/>
    <property type="match status" value="1"/>
</dbReference>
<dbReference type="PANTHER" id="PTHR32008:SF2">
    <property type="entry name" value="MATURIN"/>
    <property type="match status" value="1"/>
</dbReference>
<dbReference type="Pfam" id="PF15167">
    <property type="entry name" value="DUF4581"/>
    <property type="match status" value="1"/>
</dbReference>
<comment type="function">
    <text evidence="1 2">Promotes megakaryocyte differentiation by enhancing ERK and JNK signaling as well as up-regulating RUNX1 and FLI1 expression (By similarity). Represses NF-kappa-B transcriptional activity by inhibiting phosphorylation of RELA at 'Ser- 536' (By similarity). May be involved in early neuronal development (By similarity).</text>
</comment>
<comment type="subcellular location">
    <subcellularLocation>
        <location evidence="2">Cytoplasm</location>
    </subcellularLocation>
</comment>
<comment type="PTM">
    <text evidence="2">Phosphorylation at Tyr-34 is essential for its ability to promote megakaryocyte differentiation.</text>
</comment>
<comment type="similarity">
    <text evidence="4">Belongs to the MTURN family.</text>
</comment>
<evidence type="ECO:0000250" key="1">
    <source>
        <dbReference type="UniProtKB" id="Q7ZX36"/>
    </source>
</evidence>
<evidence type="ECO:0000250" key="2">
    <source>
        <dbReference type="UniProtKB" id="Q8N3F0"/>
    </source>
</evidence>
<evidence type="ECO:0000256" key="3">
    <source>
        <dbReference type="SAM" id="MobiDB-lite"/>
    </source>
</evidence>
<evidence type="ECO:0000305" key="4"/>
<name>MTURN_BOVIN</name>
<feature type="chain" id="PRO_0000359896" description="Maturin">
    <location>
        <begin position="1"/>
        <end position="131"/>
    </location>
</feature>
<feature type="region of interest" description="Disordered" evidence="3">
    <location>
        <begin position="107"/>
        <end position="131"/>
    </location>
</feature>
<feature type="compositionally biased region" description="Acidic residues" evidence="3">
    <location>
        <begin position="107"/>
        <end position="120"/>
    </location>
</feature>
<feature type="modified residue" description="Phosphotyrosine" evidence="2">
    <location>
        <position position="34"/>
    </location>
</feature>
<proteinExistence type="evidence at transcript level"/>